<feature type="chain" id="PRO_1000194479" description="Ion-translocating oxidoreductase complex subunit B">
    <location>
        <begin position="1"/>
        <end position="192"/>
    </location>
</feature>
<feature type="domain" description="4Fe-4S" evidence="1">
    <location>
        <begin position="32"/>
        <end position="91"/>
    </location>
</feature>
<feature type="domain" description="4Fe-4S ferredoxin-type 1" evidence="1">
    <location>
        <begin position="108"/>
        <end position="137"/>
    </location>
</feature>
<feature type="domain" description="4Fe-4S ferredoxin-type 2" evidence="1">
    <location>
        <begin position="138"/>
        <end position="167"/>
    </location>
</feature>
<feature type="region of interest" description="Hydrophobic" evidence="1">
    <location>
        <begin position="1"/>
        <end position="26"/>
    </location>
</feature>
<feature type="binding site" evidence="1">
    <location>
        <position position="49"/>
    </location>
    <ligand>
        <name>[4Fe-4S] cluster</name>
        <dbReference type="ChEBI" id="CHEBI:49883"/>
        <label>1</label>
    </ligand>
</feature>
<feature type="binding site" evidence="1">
    <location>
        <position position="52"/>
    </location>
    <ligand>
        <name>[4Fe-4S] cluster</name>
        <dbReference type="ChEBI" id="CHEBI:49883"/>
        <label>1</label>
    </ligand>
</feature>
<feature type="binding site" evidence="1">
    <location>
        <position position="57"/>
    </location>
    <ligand>
        <name>[4Fe-4S] cluster</name>
        <dbReference type="ChEBI" id="CHEBI:49883"/>
        <label>1</label>
    </ligand>
</feature>
<feature type="binding site" evidence="1">
    <location>
        <position position="74"/>
    </location>
    <ligand>
        <name>[4Fe-4S] cluster</name>
        <dbReference type="ChEBI" id="CHEBI:49883"/>
        <label>1</label>
    </ligand>
</feature>
<feature type="binding site" evidence="1">
    <location>
        <position position="117"/>
    </location>
    <ligand>
        <name>[4Fe-4S] cluster</name>
        <dbReference type="ChEBI" id="CHEBI:49883"/>
        <label>2</label>
    </ligand>
</feature>
<feature type="binding site" evidence="1">
    <location>
        <position position="120"/>
    </location>
    <ligand>
        <name>[4Fe-4S] cluster</name>
        <dbReference type="ChEBI" id="CHEBI:49883"/>
        <label>2</label>
    </ligand>
</feature>
<feature type="binding site" evidence="1">
    <location>
        <position position="123"/>
    </location>
    <ligand>
        <name>[4Fe-4S] cluster</name>
        <dbReference type="ChEBI" id="CHEBI:49883"/>
        <label>2</label>
    </ligand>
</feature>
<feature type="binding site" evidence="1">
    <location>
        <position position="127"/>
    </location>
    <ligand>
        <name>[4Fe-4S] cluster</name>
        <dbReference type="ChEBI" id="CHEBI:49883"/>
        <label>3</label>
    </ligand>
</feature>
<feature type="binding site" evidence="1">
    <location>
        <position position="147"/>
    </location>
    <ligand>
        <name>[4Fe-4S] cluster</name>
        <dbReference type="ChEBI" id="CHEBI:49883"/>
        <label>3</label>
    </ligand>
</feature>
<feature type="binding site" evidence="1">
    <location>
        <position position="150"/>
    </location>
    <ligand>
        <name>[4Fe-4S] cluster</name>
        <dbReference type="ChEBI" id="CHEBI:49883"/>
        <label>3</label>
    </ligand>
</feature>
<feature type="binding site" evidence="1">
    <location>
        <position position="153"/>
    </location>
    <ligand>
        <name>[4Fe-4S] cluster</name>
        <dbReference type="ChEBI" id="CHEBI:49883"/>
        <label>3</label>
    </ligand>
</feature>
<feature type="binding site" evidence="1">
    <location>
        <position position="157"/>
    </location>
    <ligand>
        <name>[4Fe-4S] cluster</name>
        <dbReference type="ChEBI" id="CHEBI:49883"/>
        <label>2</label>
    </ligand>
</feature>
<evidence type="ECO:0000255" key="1">
    <source>
        <dbReference type="HAMAP-Rule" id="MF_00463"/>
    </source>
</evidence>
<proteinExistence type="inferred from homology"/>
<gene>
    <name evidence="1" type="primary">rsxB</name>
    <name type="synonym">rnfB</name>
    <name type="ordered locus">ECH74115_2340</name>
</gene>
<name>RSXB_ECO5E</name>
<reference key="1">
    <citation type="journal article" date="2011" name="Proc. Natl. Acad. Sci. U.S.A.">
        <title>Genomic anatomy of Escherichia coli O157:H7 outbreaks.</title>
        <authorList>
            <person name="Eppinger M."/>
            <person name="Mammel M.K."/>
            <person name="Leclerc J.E."/>
            <person name="Ravel J."/>
            <person name="Cebula T.A."/>
        </authorList>
    </citation>
    <scope>NUCLEOTIDE SEQUENCE [LARGE SCALE GENOMIC DNA]</scope>
    <source>
        <strain>EC4115 / EHEC</strain>
    </source>
</reference>
<sequence length="192" mass="20544">MNAIWIAVAAVSLLGLAFGAILGYASRRFAVEDDPVVEKIDEILPQSQCGQCGYPGCRPYAEAISCNGEKINRCAPGGEAVMLKIAELLNVEPQPLDGEAQELTPARMVAVIDENNCIGCTKCIQACPVDAIVGATRAMHTVMSDLCTGCNLCVDPCPTHCISLQPVAETPDSWKWDLNTIPVRIIPVEHHA</sequence>
<protein>
    <recommendedName>
        <fullName evidence="1">Ion-translocating oxidoreductase complex subunit B</fullName>
        <ecNumber evidence="1">7.-.-.-</ecNumber>
    </recommendedName>
    <alternativeName>
        <fullName evidence="1">Rsx electron transport complex subunit B</fullName>
    </alternativeName>
</protein>
<comment type="function">
    <text evidence="1">Part of a membrane-bound complex that couples electron transfer with translocation of ions across the membrane. Required to maintain the reduced state of SoxR.</text>
</comment>
<comment type="cofactor">
    <cofactor evidence="1">
        <name>[4Fe-4S] cluster</name>
        <dbReference type="ChEBI" id="CHEBI:49883"/>
    </cofactor>
    <text evidence="1">Binds 3 [4Fe-4S] clusters.</text>
</comment>
<comment type="subunit">
    <text evidence="1">The complex is composed of six subunits: RsxA, RsxB, RsxC, RsxD, RsxE and RsxG.</text>
</comment>
<comment type="subcellular location">
    <subcellularLocation>
        <location evidence="1">Cell inner membrane</location>
    </subcellularLocation>
</comment>
<comment type="similarity">
    <text evidence="1">Belongs to the 4Fe4S bacterial-type ferredoxin family. RnfB subfamily.</text>
</comment>
<accession>B5Z462</accession>
<keyword id="KW-0004">4Fe-4S</keyword>
<keyword id="KW-0997">Cell inner membrane</keyword>
<keyword id="KW-1003">Cell membrane</keyword>
<keyword id="KW-0249">Electron transport</keyword>
<keyword id="KW-0408">Iron</keyword>
<keyword id="KW-0411">Iron-sulfur</keyword>
<keyword id="KW-0472">Membrane</keyword>
<keyword id="KW-0479">Metal-binding</keyword>
<keyword id="KW-0677">Repeat</keyword>
<keyword id="KW-1278">Translocase</keyword>
<keyword id="KW-0813">Transport</keyword>
<organism>
    <name type="scientific">Escherichia coli O157:H7 (strain EC4115 / EHEC)</name>
    <dbReference type="NCBI Taxonomy" id="444450"/>
    <lineage>
        <taxon>Bacteria</taxon>
        <taxon>Pseudomonadati</taxon>
        <taxon>Pseudomonadota</taxon>
        <taxon>Gammaproteobacteria</taxon>
        <taxon>Enterobacterales</taxon>
        <taxon>Enterobacteriaceae</taxon>
        <taxon>Escherichia</taxon>
    </lineage>
</organism>
<dbReference type="EC" id="7.-.-.-" evidence="1"/>
<dbReference type="EMBL" id="CP001164">
    <property type="protein sequence ID" value="ACI36422.1"/>
    <property type="molecule type" value="Genomic_DNA"/>
</dbReference>
<dbReference type="RefSeq" id="WP_000991809.1">
    <property type="nucleotide sequence ID" value="NC_011353.1"/>
</dbReference>
<dbReference type="GeneID" id="93775780"/>
<dbReference type="KEGG" id="ecf:ECH74115_2340"/>
<dbReference type="HOGENOM" id="CLU_063448_2_0_6"/>
<dbReference type="GO" id="GO:0005886">
    <property type="term" value="C:plasma membrane"/>
    <property type="evidence" value="ECO:0007669"/>
    <property type="project" value="UniProtKB-SubCell"/>
</dbReference>
<dbReference type="GO" id="GO:0051539">
    <property type="term" value="F:4 iron, 4 sulfur cluster binding"/>
    <property type="evidence" value="ECO:0007669"/>
    <property type="project" value="UniProtKB-UniRule"/>
</dbReference>
<dbReference type="GO" id="GO:0009055">
    <property type="term" value="F:electron transfer activity"/>
    <property type="evidence" value="ECO:0007669"/>
    <property type="project" value="InterPro"/>
</dbReference>
<dbReference type="GO" id="GO:0046872">
    <property type="term" value="F:metal ion binding"/>
    <property type="evidence" value="ECO:0007669"/>
    <property type="project" value="UniProtKB-KW"/>
</dbReference>
<dbReference type="GO" id="GO:0022900">
    <property type="term" value="P:electron transport chain"/>
    <property type="evidence" value="ECO:0007669"/>
    <property type="project" value="UniProtKB-UniRule"/>
</dbReference>
<dbReference type="FunFam" id="1.10.15.40:FF:000001">
    <property type="entry name" value="Ion-translocating oxidoreductase complex subunit B"/>
    <property type="match status" value="1"/>
</dbReference>
<dbReference type="Gene3D" id="3.30.70.20">
    <property type="match status" value="1"/>
</dbReference>
<dbReference type="Gene3D" id="1.10.15.40">
    <property type="entry name" value="Electron transport complex subunit B, putative Fe-S cluster"/>
    <property type="match status" value="1"/>
</dbReference>
<dbReference type="HAMAP" id="MF_00463">
    <property type="entry name" value="RsxB_RnfB"/>
    <property type="match status" value="1"/>
</dbReference>
<dbReference type="InterPro" id="IPR007202">
    <property type="entry name" value="4Fe-4S_dom"/>
</dbReference>
<dbReference type="InterPro" id="IPR017896">
    <property type="entry name" value="4Fe4S_Fe-S-bd"/>
</dbReference>
<dbReference type="InterPro" id="IPR017900">
    <property type="entry name" value="4Fe4S_Fe_S_CS"/>
</dbReference>
<dbReference type="InterPro" id="IPR050395">
    <property type="entry name" value="4Fe4S_Ferredoxin_RnfB"/>
</dbReference>
<dbReference type="InterPro" id="IPR010207">
    <property type="entry name" value="Elect_transpt_cplx_RnfB/RsxB"/>
</dbReference>
<dbReference type="InterPro" id="IPR016463">
    <property type="entry name" value="RnfB/RsxB_Proteobac"/>
</dbReference>
<dbReference type="NCBIfam" id="NF003475">
    <property type="entry name" value="PRK05113.1"/>
    <property type="match status" value="1"/>
</dbReference>
<dbReference type="NCBIfam" id="TIGR01944">
    <property type="entry name" value="rnfB"/>
    <property type="match status" value="1"/>
</dbReference>
<dbReference type="PANTHER" id="PTHR43560">
    <property type="entry name" value="ION-TRANSLOCATING OXIDOREDUCTASE COMPLEX SUBUNIT B"/>
    <property type="match status" value="1"/>
</dbReference>
<dbReference type="PANTHER" id="PTHR43560:SF1">
    <property type="entry name" value="ION-TRANSLOCATING OXIDOREDUCTASE COMPLEX SUBUNIT B"/>
    <property type="match status" value="1"/>
</dbReference>
<dbReference type="Pfam" id="PF14697">
    <property type="entry name" value="Fer4_21"/>
    <property type="match status" value="1"/>
</dbReference>
<dbReference type="Pfam" id="PF04060">
    <property type="entry name" value="FeS"/>
    <property type="match status" value="1"/>
</dbReference>
<dbReference type="PIRSF" id="PIRSF005784">
    <property type="entry name" value="Elect_transpt_RnfB"/>
    <property type="match status" value="1"/>
</dbReference>
<dbReference type="SUPFAM" id="SSF54862">
    <property type="entry name" value="4Fe-4S ferredoxins"/>
    <property type="match status" value="1"/>
</dbReference>
<dbReference type="PROSITE" id="PS51656">
    <property type="entry name" value="4FE4S"/>
    <property type="match status" value="1"/>
</dbReference>
<dbReference type="PROSITE" id="PS00198">
    <property type="entry name" value="4FE4S_FER_1"/>
    <property type="match status" value="2"/>
</dbReference>
<dbReference type="PROSITE" id="PS51379">
    <property type="entry name" value="4FE4S_FER_2"/>
    <property type="match status" value="2"/>
</dbReference>